<evidence type="ECO:0000250" key="1"/>
<evidence type="ECO:0000255" key="2"/>
<evidence type="ECO:0000255" key="3">
    <source>
        <dbReference type="PROSITE-ProRule" id="PRU00274"/>
    </source>
</evidence>
<evidence type="ECO:0000269" key="4">
    <source>
    </source>
</evidence>
<evidence type="ECO:0000269" key="5">
    <source>
    </source>
</evidence>
<evidence type="ECO:0000269" key="6">
    <source>
    </source>
</evidence>
<evidence type="ECO:0000269" key="7">
    <source>
    </source>
</evidence>
<evidence type="ECO:0000303" key="8">
    <source>
    </source>
</evidence>
<evidence type="ECO:0000303" key="9">
    <source>
    </source>
</evidence>
<evidence type="ECO:0000303" key="10">
    <source>
    </source>
</evidence>
<evidence type="ECO:0000303" key="11">
    <source>
    </source>
</evidence>
<evidence type="ECO:0000303" key="12">
    <source>
    </source>
</evidence>
<evidence type="ECO:0000305" key="13"/>
<feature type="signal peptide" evidence="2">
    <location>
        <begin position="1"/>
        <end position="50"/>
    </location>
</feature>
<feature type="propeptide" id="PRO_0000027954" description="Activation peptide" evidence="2">
    <location>
        <begin position="51"/>
        <end position="53"/>
    </location>
</feature>
<feature type="chain" id="PRO_0000027955" description="Kallikrein-11">
    <location>
        <begin position="54"/>
        <end position="282"/>
    </location>
</feature>
<feature type="chain" id="PRO_0000302061" description="Kallikrein-11 inactive chain 1">
    <location>
        <begin position="54"/>
        <end position="188"/>
    </location>
</feature>
<feature type="chain" id="PRO_0000302062" description="Kallikrein-11 inactive chain 2">
    <location>
        <begin position="189"/>
        <end position="282"/>
    </location>
</feature>
<feature type="domain" description="Peptidase S1" evidence="3">
    <location>
        <begin position="53"/>
        <end position="280"/>
    </location>
</feature>
<feature type="active site" description="Charge relay system" evidence="1">
    <location>
        <position position="94"/>
    </location>
</feature>
<feature type="active site" description="Charge relay system" evidence="1">
    <location>
        <position position="142"/>
    </location>
</feature>
<feature type="active site" description="Charge relay system" evidence="1">
    <location>
        <position position="235"/>
    </location>
</feature>
<feature type="glycosylation site" description="N-linked (GlcNAc...) asparagine" evidence="2">
    <location>
        <position position="131"/>
    </location>
</feature>
<feature type="glycosylation site" description="N-linked (GlcNAc...) asparagine" evidence="2">
    <location>
        <position position="197"/>
    </location>
</feature>
<feature type="glycosylation site" description="N-linked (GlcNAc...) asparagine" evidence="2">
    <location>
        <position position="213"/>
    </location>
</feature>
<feature type="glycosylation site" description="N-linked (GlcNAc...) asparagine" evidence="2">
    <location>
        <position position="242"/>
    </location>
</feature>
<feature type="disulfide bond" evidence="3">
    <location>
        <begin position="60"/>
        <end position="195"/>
    </location>
</feature>
<feature type="disulfide bond" evidence="3">
    <location>
        <begin position="79"/>
        <end position="95"/>
    </location>
</feature>
<feature type="disulfide bond" evidence="3">
    <location>
        <begin position="167"/>
        <end position="269"/>
    </location>
</feature>
<feature type="disulfide bond" evidence="3">
    <location>
        <begin position="174"/>
        <end position="241"/>
    </location>
</feature>
<feature type="disulfide bond" evidence="3">
    <location>
        <begin position="206"/>
        <end position="220"/>
    </location>
</feature>
<feature type="disulfide bond" evidence="3">
    <location>
        <begin position="231"/>
        <end position="256"/>
    </location>
</feature>
<feature type="splice variant" id="VSP_005402" description="In isoform 1 and isoform 4." evidence="8 10 11 12">
    <location>
        <begin position="1"/>
        <end position="32"/>
    </location>
</feature>
<feature type="splice variant" id="VSP_043326" description="In isoform 3 and isoform 4." evidence="9">
    <original>P</original>
    <variation>PWVSLTSPTHVSPDLSSSNYCLSHLS</variation>
    <location>
        <position position="98"/>
    </location>
</feature>
<feature type="sequence variant" id="VAR_051856" description="In dbSNP:rs2288892.">
    <original>A</original>
    <variation>T</variation>
    <location>
        <position position="32"/>
    </location>
</feature>
<feature type="sequence variant" id="VAR_021943" description="In dbSNP:rs3745539.">
    <original>G</original>
    <variation>E</variation>
    <location>
        <position position="49"/>
    </location>
</feature>
<feature type="sequence variant" id="VAR_088990" description="In IEKD; pathogenic; the equivalent mutation in a knockin mouse model results in hyperkeratosis and scaling; abolishes signal peptide cleavage; the mutant protein is not secreted; does not localize to Golgi apparatus but it is retained in the endoplasmic reticulum; dbSNP:rs776782387." evidence="6 7">
    <original>G</original>
    <variation>E</variation>
    <location>
        <position position="50"/>
    </location>
</feature>
<feature type="sequence variant" id="VAR_088991" description="In IEKD; likely pathogenic." evidence="6">
    <original>G</original>
    <variation>R</variation>
    <location>
        <position position="50"/>
    </location>
</feature>
<feature type="sequence variant" id="VAR_024296" description="In dbSNP:rs1048328.">
    <original>R</original>
    <variation>C</variation>
    <location>
        <position position="166"/>
    </location>
</feature>
<reference key="1">
    <citation type="journal article" date="1998" name="Biochim. Biophys. Acta">
        <title>cDNA cloning and expression of a novel serine protease, TLSP.</title>
        <authorList>
            <person name="Yoshida S."/>
            <person name="Taniguchi M."/>
            <person name="Suemoto T."/>
            <person name="Oka T."/>
            <person name="He X.P."/>
            <person name="Shiosaka S."/>
        </authorList>
    </citation>
    <scope>NUCLEOTIDE SEQUENCE [MRNA] (ISOFORM 2)</scope>
    <source>
        <tissue>Hippocampus</tissue>
    </source>
</reference>
<reference key="2">
    <citation type="journal article" date="2000" name="Biochem. Biophys. Res. Commun.">
        <title>A novel isoform of a kallikrein-like protease, TLSP/hippostasin, (PRSS20), is expressed in the human brain and prostate.</title>
        <authorList>
            <person name="Mitsui S."/>
            <person name="Yamada T."/>
            <person name="Okui A."/>
            <person name="Kominami K."/>
            <person name="Uemura H."/>
            <person name="Yamaguchi N."/>
        </authorList>
    </citation>
    <scope>NUCLEOTIDE SEQUENCE [MRNA] (ISOFORMS 1 AND 2)</scope>
    <scope>FUNCTION</scope>
    <scope>TISSUE SPECIFICITY</scope>
    <source>
        <tissue>Hippocampus</tissue>
        <tissue>Prostate</tissue>
    </source>
</reference>
<reference key="3">
    <citation type="journal article" date="2000" name="Genomics">
        <title>Genomic organization, mapping, tissue expression, and hormonal regulation of trypsin-like serine protease (TLSP PRSS20), a new member of the human kallikrein gene family.</title>
        <authorList>
            <person name="Yousef G.M."/>
            <person name="Scorilas A."/>
            <person name="Diamandis E.P."/>
        </authorList>
    </citation>
    <scope>NUCLEOTIDE SEQUENCE [GENOMIC DNA] (ISOFORM 1)</scope>
</reference>
<reference key="4">
    <citation type="journal article" date="2000" name="Gene">
        <title>Sequencing and expression analysis of the serine protease gene cluster located in chromosome 19q13 region.</title>
        <authorList>
            <person name="Gan L."/>
            <person name="Lee I."/>
            <person name="Smith R."/>
            <person name="Argonza-Barrett R."/>
            <person name="Lei H."/>
            <person name="McCuaig J."/>
            <person name="Moss P."/>
            <person name="Paeper B."/>
            <person name="Wang K."/>
        </authorList>
    </citation>
    <scope>NUCLEOTIDE SEQUENCE [GENOMIC DNA]</scope>
</reference>
<reference key="5">
    <citation type="journal article" date="2003" name="Prostate">
        <title>Molecular cloning and expression of a variant form of hippostasin/KLK11 in prostate.</title>
        <authorList>
            <person name="Nakamura T."/>
            <person name="Mitsui S."/>
            <person name="Okui A."/>
            <person name="Miki T."/>
            <person name="Yamaguchi N."/>
        </authorList>
    </citation>
    <scope>NUCLEOTIDE SEQUENCE [MRNA] (ISOFORM 3)</scope>
</reference>
<reference key="6">
    <citation type="journal article" date="2006" name="FEBS J.">
        <title>Multiple promoters regulate tissue-specific alternative splicing of the human kallikrein gene, KLK11/hippostasin.</title>
        <authorList>
            <person name="Mitsui S."/>
            <person name="Nakamura T."/>
            <person name="Okui A."/>
            <person name="Kominami K."/>
            <person name="Uemura H."/>
            <person name="Yamaguchi N."/>
        </authorList>
    </citation>
    <scope>NUCLEOTIDE SEQUENCE [MRNA] (ISOFORM 1)</scope>
    <scope>SUBCELLULAR LOCATION</scope>
    <scope>ALTERNATIVE SPLICING</scope>
</reference>
<reference key="7">
    <citation type="journal article" date="2003" name="Genome Res.">
        <title>The secreted protein discovery initiative (SPDI), a large-scale effort to identify novel human secreted and transmembrane proteins: a bioinformatics assessment.</title>
        <authorList>
            <person name="Clark H.F."/>
            <person name="Gurney A.L."/>
            <person name="Abaya E."/>
            <person name="Baker K."/>
            <person name="Baldwin D.T."/>
            <person name="Brush J."/>
            <person name="Chen J."/>
            <person name="Chow B."/>
            <person name="Chui C."/>
            <person name="Crowley C."/>
            <person name="Currell B."/>
            <person name="Deuel B."/>
            <person name="Dowd P."/>
            <person name="Eaton D."/>
            <person name="Foster J.S."/>
            <person name="Grimaldi C."/>
            <person name="Gu Q."/>
            <person name="Hass P.E."/>
            <person name="Heldens S."/>
            <person name="Huang A."/>
            <person name="Kim H.S."/>
            <person name="Klimowski L."/>
            <person name="Jin Y."/>
            <person name="Johnson S."/>
            <person name="Lee J."/>
            <person name="Lewis L."/>
            <person name="Liao D."/>
            <person name="Mark M.R."/>
            <person name="Robbie E."/>
            <person name="Sanchez C."/>
            <person name="Schoenfeld J."/>
            <person name="Seshagiri S."/>
            <person name="Simmons L."/>
            <person name="Singh J."/>
            <person name="Smith V."/>
            <person name="Stinson J."/>
            <person name="Vagts A."/>
            <person name="Vandlen R.L."/>
            <person name="Watanabe C."/>
            <person name="Wieand D."/>
            <person name="Woods K."/>
            <person name="Xie M.-H."/>
            <person name="Yansura D.G."/>
            <person name="Yi S."/>
            <person name="Yu G."/>
            <person name="Yuan J."/>
            <person name="Zhang M."/>
            <person name="Zhang Z."/>
            <person name="Goddard A.D."/>
            <person name="Wood W.I."/>
            <person name="Godowski P.J."/>
            <person name="Gray A.M."/>
        </authorList>
    </citation>
    <scope>NUCLEOTIDE SEQUENCE [LARGE SCALE MRNA] (ISOFORM 1)</scope>
</reference>
<reference key="8">
    <citation type="journal article" date="2004" name="Nature">
        <title>The DNA sequence and biology of human chromosome 19.</title>
        <authorList>
            <person name="Grimwood J."/>
            <person name="Gordon L.A."/>
            <person name="Olsen A.S."/>
            <person name="Terry A."/>
            <person name="Schmutz J."/>
            <person name="Lamerdin J.E."/>
            <person name="Hellsten U."/>
            <person name="Goodstein D."/>
            <person name="Couronne O."/>
            <person name="Tran-Gyamfi M."/>
            <person name="Aerts A."/>
            <person name="Altherr M."/>
            <person name="Ashworth L."/>
            <person name="Bajorek E."/>
            <person name="Black S."/>
            <person name="Branscomb E."/>
            <person name="Caenepeel S."/>
            <person name="Carrano A.V."/>
            <person name="Caoile C."/>
            <person name="Chan Y.M."/>
            <person name="Christensen M."/>
            <person name="Cleland C.A."/>
            <person name="Copeland A."/>
            <person name="Dalin E."/>
            <person name="Dehal P."/>
            <person name="Denys M."/>
            <person name="Detter J.C."/>
            <person name="Escobar J."/>
            <person name="Flowers D."/>
            <person name="Fotopulos D."/>
            <person name="Garcia C."/>
            <person name="Georgescu A.M."/>
            <person name="Glavina T."/>
            <person name="Gomez M."/>
            <person name="Gonzales E."/>
            <person name="Groza M."/>
            <person name="Hammon N."/>
            <person name="Hawkins T."/>
            <person name="Haydu L."/>
            <person name="Ho I."/>
            <person name="Huang W."/>
            <person name="Israni S."/>
            <person name="Jett J."/>
            <person name="Kadner K."/>
            <person name="Kimball H."/>
            <person name="Kobayashi A."/>
            <person name="Larionov V."/>
            <person name="Leem S.-H."/>
            <person name="Lopez F."/>
            <person name="Lou Y."/>
            <person name="Lowry S."/>
            <person name="Malfatti S."/>
            <person name="Martinez D."/>
            <person name="McCready P.M."/>
            <person name="Medina C."/>
            <person name="Morgan J."/>
            <person name="Nelson K."/>
            <person name="Nolan M."/>
            <person name="Ovcharenko I."/>
            <person name="Pitluck S."/>
            <person name="Pollard M."/>
            <person name="Popkie A.P."/>
            <person name="Predki P."/>
            <person name="Quan G."/>
            <person name="Ramirez L."/>
            <person name="Rash S."/>
            <person name="Retterer J."/>
            <person name="Rodriguez A."/>
            <person name="Rogers S."/>
            <person name="Salamov A."/>
            <person name="Salazar A."/>
            <person name="She X."/>
            <person name="Smith D."/>
            <person name="Slezak T."/>
            <person name="Solovyev V."/>
            <person name="Thayer N."/>
            <person name="Tice H."/>
            <person name="Tsai M."/>
            <person name="Ustaszewska A."/>
            <person name="Vo N."/>
            <person name="Wagner M."/>
            <person name="Wheeler J."/>
            <person name="Wu K."/>
            <person name="Xie G."/>
            <person name="Yang J."/>
            <person name="Dubchak I."/>
            <person name="Furey T.S."/>
            <person name="DeJong P."/>
            <person name="Dickson M."/>
            <person name="Gordon D."/>
            <person name="Eichler E.E."/>
            <person name="Pennacchio L.A."/>
            <person name="Richardson P."/>
            <person name="Stubbs L."/>
            <person name="Rokhsar D.S."/>
            <person name="Myers R.M."/>
            <person name="Rubin E.M."/>
            <person name="Lucas S.M."/>
        </authorList>
    </citation>
    <scope>NUCLEOTIDE SEQUENCE [LARGE SCALE GENOMIC DNA]</scope>
</reference>
<reference key="9">
    <citation type="submission" date="2005-07" db="EMBL/GenBank/DDBJ databases">
        <authorList>
            <person name="Mural R.J."/>
            <person name="Istrail S."/>
            <person name="Sutton G."/>
            <person name="Florea L."/>
            <person name="Halpern A.L."/>
            <person name="Mobarry C.M."/>
            <person name="Lippert R."/>
            <person name="Walenz B."/>
            <person name="Shatkay H."/>
            <person name="Dew I."/>
            <person name="Miller J.R."/>
            <person name="Flanigan M.J."/>
            <person name="Edwards N.J."/>
            <person name="Bolanos R."/>
            <person name="Fasulo D."/>
            <person name="Halldorsson B.V."/>
            <person name="Hannenhalli S."/>
            <person name="Turner R."/>
            <person name="Yooseph S."/>
            <person name="Lu F."/>
            <person name="Nusskern D.R."/>
            <person name="Shue B.C."/>
            <person name="Zheng X.H."/>
            <person name="Zhong F."/>
            <person name="Delcher A.L."/>
            <person name="Huson D.H."/>
            <person name="Kravitz S.A."/>
            <person name="Mouchard L."/>
            <person name="Reinert K."/>
            <person name="Remington K.A."/>
            <person name="Clark A.G."/>
            <person name="Waterman M.S."/>
            <person name="Eichler E.E."/>
            <person name="Adams M.D."/>
            <person name="Hunkapiller M.W."/>
            <person name="Myers E.W."/>
            <person name="Venter J.C."/>
        </authorList>
    </citation>
    <scope>NUCLEOTIDE SEQUENCE [LARGE SCALE GENOMIC DNA]</scope>
</reference>
<reference key="10">
    <citation type="journal article" date="2004" name="Genome Res.">
        <title>The status, quality, and expansion of the NIH full-length cDNA project: the Mammalian Gene Collection (MGC).</title>
        <authorList>
            <consortium name="The MGC Project Team"/>
        </authorList>
    </citation>
    <scope>NUCLEOTIDE SEQUENCE [LARGE SCALE MRNA] (ISOFORM 1)</scope>
    <source>
        <tissue>Testis</tissue>
    </source>
</reference>
<reference key="11">
    <citation type="journal article" date="2006" name="Clin. Cancer Res.">
        <title>Purification and characterization of human kallikrein 11, a candidate prostate and ovarian cancer biomarker, from seminal plasma.</title>
        <authorList>
            <person name="Luo L.Y."/>
            <person name="Shan S.J."/>
            <person name="Elliott M.B."/>
            <person name="Soosaipillai A."/>
            <person name="Diamandis E.P."/>
        </authorList>
    </citation>
    <scope>FUNCTION</scope>
    <scope>PROTEOLYTIC PROCESSING</scope>
    <scope>TISSUE SPECIFICITY</scope>
</reference>
<reference key="12">
    <citation type="journal article" date="2023" name="Br. J. Dermatol.">
        <title>Variants in KLK11, affecting signal peptide cleavage of kallikrein-related peptidase 11, cause an autosomal-dominant cornification disorder.</title>
        <authorList>
            <person name="Gong Z."/>
            <person name="Dai S."/>
            <person name="Jiang X."/>
            <person name="Lee M."/>
            <person name="Zhu X."/>
            <person name="Wang H."/>
            <person name="Lin Z."/>
        </authorList>
    </citation>
    <scope>VARIANTS IEKD GLU-50 AND ARG-50</scope>
    <scope>CHARACTERIZATION OF VARIANT IEKD GLU-50</scope>
    <scope>SUBCELLULAR LOCATION</scope>
</reference>
<reference key="13">
    <citation type="journal article" date="2023" name="Br. J. Dermatol.">
        <title>KLK11 ichthyosis: large truncal hyperkeratotic pigmented plaques underscore a distinct autosomal dominant disorder of cornification.</title>
        <authorList>
            <person name="Takeichi T."/>
            <person name="Ito Y."/>
            <person name="Lee J.Y.W."/>
            <person name="Murase C."/>
            <person name="Okuno Y."/>
            <person name="Muro Y."/>
            <person name="McGrath J.A."/>
            <person name="Akiyama M."/>
        </authorList>
    </citation>
    <scope>VARIANT IEKD GLU-50</scope>
    <scope>INVOLVEMENT IN IEKD</scope>
</reference>
<gene>
    <name type="primary">KLK11</name>
    <name type="synonym">PRSS20</name>
    <name type="synonym">TLSP</name>
    <name type="ORF">UNQ649/PRO1279</name>
</gene>
<comment type="function">
    <text evidence="4 5">Possible multifunctional protease. Efficiently cleaves 'bz-Phe-Arg-4-methylcoumaryl-7-amide', a kallikrein substrate, and weakly cleaves other substrates for kallikrein and trypsin. Cleaves synthetic peptides after arginine but not lysine residues.</text>
</comment>
<comment type="subcellular location">
    <molecule>Isoform 1</molecule>
    <subcellularLocation>
        <location>Secreted</location>
    </subcellularLocation>
</comment>
<comment type="subcellular location">
    <molecule>Isoform 2</molecule>
    <subcellularLocation>
        <location evidence="6">Golgi apparatus</location>
    </subcellularLocation>
    <subcellularLocation>
        <location evidence="6">Secreted</location>
    </subcellularLocation>
</comment>
<comment type="alternative products">
    <event type="alternative splicing"/>
    <isoform>
        <id>Q9UBX7-2</id>
        <name>2</name>
        <sequence type="displayed"/>
    </isoform>
    <isoform>
        <id>Q9UBX7-1</id>
        <name>1</name>
        <sequence type="described" ref="VSP_005402"/>
    </isoform>
    <isoform>
        <id>Q9UBX7-3</id>
        <name>3</name>
        <sequence type="described" ref="VSP_043326"/>
    </isoform>
    <isoform>
        <id>Q9UBX7-4</id>
        <name>4</name>
        <sequence type="described" ref="VSP_005402 VSP_043326"/>
    </isoform>
</comment>
<comment type="tissue specificity">
    <text evidence="4 5">Expressed in brain, skin and prostate. Isoform 1 is expressed preferentially in brain. Isoform 2 is expressed in prostate. Present in seminal plasma at concentrations ranging from 2 to 37 microg/mL (at protein level).</text>
</comment>
<comment type="PTM">
    <text evidence="5">About 40% of KLK11 is inactivated by internal cleavage after Arg-188. This proteolytic inactivation may be effected by plasminogen.</text>
</comment>
<comment type="disease" evidence="6 7">
    <disease id="DI-06761">
        <name>Ichthyosis with erythrokeratoderma</name>
        <acronym>IEKD</acronym>
        <description>An autosomal dominant genodermatosis characterized by early-onset ichthyosiform erythroderma with excessive skin scaling and peeling, and erythematous hyperkeratotic plaques. Lesions are present at birth or appear soon after.</description>
        <dbReference type="MIM" id="620507"/>
    </disease>
    <text>The disease is caused by variants affecting the gene represented in this entry.</text>
</comment>
<comment type="miscellaneous">
    <molecule>Isoform 3</molecule>
    <text evidence="13">Localized in the prostate secretory epithelium.</text>
</comment>
<comment type="similarity">
    <text evidence="3">Belongs to the peptidase S1 family. Kallikrein subfamily.</text>
</comment>
<comment type="online information" name="Atlas of Genetics and Cytogenetics in Oncology and Haematology">
    <link uri="https://atlasgeneticsoncology.org/gene/41077/KLK11"/>
</comment>
<name>KLK11_HUMAN</name>
<accession>Q9UBX7</accession>
<accession>O75837</accession>
<accession>Q0WXX5</accession>
<accession>Q8IXD7</accession>
<accession>Q9NS65</accession>
<keyword id="KW-0025">Alternative splicing</keyword>
<keyword id="KW-0225">Disease variant</keyword>
<keyword id="KW-1015">Disulfide bond</keyword>
<keyword id="KW-0325">Glycoprotein</keyword>
<keyword id="KW-0333">Golgi apparatus</keyword>
<keyword id="KW-0378">Hydrolase</keyword>
<keyword id="KW-0977">Ichthyosis</keyword>
<keyword id="KW-0645">Protease</keyword>
<keyword id="KW-1267">Proteomics identification</keyword>
<keyword id="KW-1185">Reference proteome</keyword>
<keyword id="KW-0964">Secreted</keyword>
<keyword id="KW-0720">Serine protease</keyword>
<keyword id="KW-0732">Signal</keyword>
<keyword id="KW-0865">Zymogen</keyword>
<proteinExistence type="evidence at protein level"/>
<dbReference type="EC" id="3.4.21.-"/>
<dbReference type="EMBL" id="AB012917">
    <property type="protein sequence ID" value="BAA33404.1"/>
    <property type="molecule type" value="mRNA"/>
</dbReference>
<dbReference type="EMBL" id="AB013730">
    <property type="protein sequence ID" value="BAA88713.1"/>
    <property type="molecule type" value="mRNA"/>
</dbReference>
<dbReference type="EMBL" id="AB041036">
    <property type="protein sequence ID" value="BAA96797.1"/>
    <property type="molecule type" value="mRNA"/>
</dbReference>
<dbReference type="EMBL" id="AF164623">
    <property type="protein sequence ID" value="AAD47815.1"/>
    <property type="molecule type" value="Genomic_DNA"/>
</dbReference>
<dbReference type="EMBL" id="AF243527">
    <property type="protein sequence ID" value="AAG33364.1"/>
    <property type="molecule type" value="Genomic_DNA"/>
</dbReference>
<dbReference type="EMBL" id="AB078780">
    <property type="protein sequence ID" value="BAC54105.1"/>
    <property type="molecule type" value="mRNA"/>
</dbReference>
<dbReference type="EMBL" id="AB261897">
    <property type="protein sequence ID" value="BAE95335.1"/>
    <property type="molecule type" value="mRNA"/>
</dbReference>
<dbReference type="EMBL" id="AB259014">
    <property type="protein sequence ID" value="BAF02733.1"/>
    <property type="molecule type" value="mRNA"/>
</dbReference>
<dbReference type="EMBL" id="AY359014">
    <property type="protein sequence ID" value="AAQ89373.1"/>
    <property type="molecule type" value="mRNA"/>
</dbReference>
<dbReference type="EMBL" id="AC011473">
    <property type="protein sequence ID" value="AAG23257.1"/>
    <property type="molecule type" value="Genomic_DNA"/>
</dbReference>
<dbReference type="EMBL" id="CH471135">
    <property type="protein sequence ID" value="EAW71971.1"/>
    <property type="molecule type" value="Genomic_DNA"/>
</dbReference>
<dbReference type="EMBL" id="BC022068">
    <property type="protein sequence ID" value="AAH22068.1"/>
    <property type="molecule type" value="mRNA"/>
</dbReference>
<dbReference type="CCDS" id="CCDS12818.1">
    <molecule id="Q9UBX7-2"/>
</dbReference>
<dbReference type="CCDS" id="CCDS12819.1">
    <molecule id="Q9UBX7-1"/>
</dbReference>
<dbReference type="CCDS" id="CCDS54297.1">
    <molecule id="Q9UBX7-4"/>
</dbReference>
<dbReference type="RefSeq" id="NP_001129504.1">
    <molecule id="Q9UBX7-1"/>
    <property type="nucleotide sequence ID" value="NM_001136032.3"/>
</dbReference>
<dbReference type="RefSeq" id="NP_001161077.1">
    <molecule id="Q9UBX7-4"/>
    <property type="nucleotide sequence ID" value="NM_001167605.2"/>
</dbReference>
<dbReference type="RefSeq" id="NP_006844.1">
    <molecule id="Q9UBX7-1"/>
    <property type="nucleotide sequence ID" value="NM_006853.3"/>
</dbReference>
<dbReference type="RefSeq" id="NP_659196.1">
    <molecule id="Q9UBX7-2"/>
    <property type="nucleotide sequence ID" value="NM_144947.3"/>
</dbReference>
<dbReference type="RefSeq" id="XP_011524671.1">
    <molecule id="Q9UBX7-3"/>
    <property type="nucleotide sequence ID" value="XM_011526369.2"/>
</dbReference>
<dbReference type="RefSeq" id="XP_011524672.1">
    <molecule id="Q9UBX7-4"/>
    <property type="nucleotide sequence ID" value="XM_011526370.3"/>
</dbReference>
<dbReference type="RefSeq" id="XP_011524673.1">
    <molecule id="Q9UBX7-4"/>
    <property type="nucleotide sequence ID" value="XM_011526371.3"/>
</dbReference>
<dbReference type="RefSeq" id="XP_011524674.1">
    <molecule id="Q9UBX7-4"/>
    <property type="nucleotide sequence ID" value="XM_011526372.3"/>
</dbReference>
<dbReference type="RefSeq" id="XP_011524675.1">
    <molecule id="Q9UBX7-4"/>
    <property type="nucleotide sequence ID" value="XM_011526373.2"/>
</dbReference>
<dbReference type="RefSeq" id="XP_047294060.1">
    <molecule id="Q9UBX7-4"/>
    <property type="nucleotide sequence ID" value="XM_047438104.1"/>
</dbReference>
<dbReference type="RefSeq" id="XP_047294061.1">
    <molecule id="Q9UBX7-4"/>
    <property type="nucleotide sequence ID" value="XM_047438105.1"/>
</dbReference>
<dbReference type="RefSeq" id="XP_047294062.1">
    <molecule id="Q9UBX7-4"/>
    <property type="nucleotide sequence ID" value="XM_047438106.1"/>
</dbReference>
<dbReference type="RefSeq" id="XP_047294063.1">
    <molecule id="Q9UBX7-4"/>
    <property type="nucleotide sequence ID" value="XM_047438107.1"/>
</dbReference>
<dbReference type="RefSeq" id="XP_054175616.1">
    <molecule id="Q9UBX7-3"/>
    <property type="nucleotide sequence ID" value="XM_054319641.1"/>
</dbReference>
<dbReference type="RefSeq" id="XP_054175617.1">
    <molecule id="Q9UBX7-4"/>
    <property type="nucleotide sequence ID" value="XM_054319642.1"/>
</dbReference>
<dbReference type="RefSeq" id="XP_054175618.1">
    <molecule id="Q9UBX7-4"/>
    <property type="nucleotide sequence ID" value="XM_054319643.1"/>
</dbReference>
<dbReference type="RefSeq" id="XP_054175619.1">
    <molecule id="Q9UBX7-4"/>
    <property type="nucleotide sequence ID" value="XM_054319644.1"/>
</dbReference>
<dbReference type="RefSeq" id="XP_054175620.1">
    <molecule id="Q9UBX7-4"/>
    <property type="nucleotide sequence ID" value="XM_054319645.1"/>
</dbReference>
<dbReference type="RefSeq" id="XP_054175621.1">
    <molecule id="Q9UBX7-4"/>
    <property type="nucleotide sequence ID" value="XM_054319646.1"/>
</dbReference>
<dbReference type="RefSeq" id="XP_054175622.1">
    <molecule id="Q9UBX7-4"/>
    <property type="nucleotide sequence ID" value="XM_054319647.1"/>
</dbReference>
<dbReference type="RefSeq" id="XP_054175623.1">
    <molecule id="Q9UBX7-4"/>
    <property type="nucleotide sequence ID" value="XM_054319648.1"/>
</dbReference>
<dbReference type="RefSeq" id="XP_054175624.1">
    <molecule id="Q9UBX7-4"/>
    <property type="nucleotide sequence ID" value="XM_054319649.1"/>
</dbReference>
<dbReference type="SMR" id="Q9UBX7"/>
<dbReference type="BioGRID" id="116202">
    <property type="interactions" value="102"/>
</dbReference>
<dbReference type="FunCoup" id="Q9UBX7">
    <property type="interactions" value="139"/>
</dbReference>
<dbReference type="IntAct" id="Q9UBX7">
    <property type="interactions" value="22"/>
</dbReference>
<dbReference type="STRING" id="9606.ENSP00000473047"/>
<dbReference type="ChEMBL" id="CHEMBL3031"/>
<dbReference type="MEROPS" id="S01.257"/>
<dbReference type="GlyCosmos" id="Q9UBX7">
    <property type="glycosylation" value="4 sites, 1 glycan"/>
</dbReference>
<dbReference type="GlyGen" id="Q9UBX7">
    <property type="glycosylation" value="4 sites, 3 N-linked glycans (2 sites)"/>
</dbReference>
<dbReference type="iPTMnet" id="Q9UBX7"/>
<dbReference type="PhosphoSitePlus" id="Q9UBX7"/>
<dbReference type="BioMuta" id="KLK11"/>
<dbReference type="DMDM" id="88984315"/>
<dbReference type="jPOST" id="Q9UBX7"/>
<dbReference type="MassIVE" id="Q9UBX7"/>
<dbReference type="PaxDb" id="9606-ENSP00000473047"/>
<dbReference type="PeptideAtlas" id="Q9UBX7"/>
<dbReference type="ProteomicsDB" id="84094">
    <molecule id="Q9UBX7-2"/>
</dbReference>
<dbReference type="ProteomicsDB" id="84095">
    <molecule id="Q9UBX7-1"/>
</dbReference>
<dbReference type="ProteomicsDB" id="84096">
    <molecule id="Q9UBX7-3"/>
</dbReference>
<dbReference type="Antibodypedia" id="18965">
    <property type="antibodies" value="364 antibodies from 32 providers"/>
</dbReference>
<dbReference type="DNASU" id="11012"/>
<dbReference type="Ensembl" id="ENST00000319720.11">
    <molecule id="Q9UBX7-1"/>
    <property type="protein sequence ID" value="ENSP00000324269.6"/>
    <property type="gene ID" value="ENSG00000167757.14"/>
</dbReference>
<dbReference type="Ensembl" id="ENST00000391804.7">
    <molecule id="Q9UBX7-4"/>
    <property type="protein sequence ID" value="ENSP00000375680.2"/>
    <property type="gene ID" value="ENSG00000167757.14"/>
</dbReference>
<dbReference type="Ensembl" id="ENST00000453757.8">
    <molecule id="Q9UBX7-1"/>
    <property type="protein sequence ID" value="ENSP00000413958.2"/>
    <property type="gene ID" value="ENSG00000167757.14"/>
</dbReference>
<dbReference type="Ensembl" id="ENST00000594768.5">
    <molecule id="Q9UBX7-2"/>
    <property type="protein sequence ID" value="ENSP00000473047.1"/>
    <property type="gene ID" value="ENSG00000167757.14"/>
</dbReference>
<dbReference type="GeneID" id="11012"/>
<dbReference type="KEGG" id="hsa:11012"/>
<dbReference type="MANE-Select" id="ENST00000453757.8">
    <molecule id="Q9UBX7-1"/>
    <property type="protein sequence ID" value="ENSP00000413958.2"/>
    <property type="RefSeq nucleotide sequence ID" value="NM_001136032.3"/>
    <property type="RefSeq protein sequence ID" value="NP_001129504.1"/>
</dbReference>
<dbReference type="UCSC" id="uc002pvb.3">
    <molecule id="Q9UBX7-2"/>
    <property type="organism name" value="human"/>
</dbReference>
<dbReference type="AGR" id="HGNC:6359"/>
<dbReference type="CTD" id="11012"/>
<dbReference type="DisGeNET" id="11012"/>
<dbReference type="GeneCards" id="KLK11"/>
<dbReference type="HGNC" id="HGNC:6359">
    <property type="gene designation" value="KLK11"/>
</dbReference>
<dbReference type="HPA" id="ENSG00000167757">
    <property type="expression patterns" value="Tissue enhanced (esophagus, skin, vagina)"/>
</dbReference>
<dbReference type="MalaCards" id="KLK11"/>
<dbReference type="MIM" id="604434">
    <property type="type" value="gene"/>
</dbReference>
<dbReference type="MIM" id="620507">
    <property type="type" value="phenotype"/>
</dbReference>
<dbReference type="neXtProt" id="NX_Q9UBX7"/>
<dbReference type="OpenTargets" id="ENSG00000167757"/>
<dbReference type="PharmGKB" id="PA30148"/>
<dbReference type="VEuPathDB" id="HostDB:ENSG00000167757"/>
<dbReference type="eggNOG" id="KOG3627">
    <property type="taxonomic scope" value="Eukaryota"/>
</dbReference>
<dbReference type="GeneTree" id="ENSGT01020000230389"/>
<dbReference type="HOGENOM" id="CLU_006842_1_1_1"/>
<dbReference type="InParanoid" id="Q9UBX7"/>
<dbReference type="OMA" id="ATISIPH"/>
<dbReference type="OrthoDB" id="546450at2759"/>
<dbReference type="PAN-GO" id="Q9UBX7">
    <property type="GO annotations" value="1 GO annotation based on evolutionary models"/>
</dbReference>
<dbReference type="PhylomeDB" id="Q9UBX7"/>
<dbReference type="TreeFam" id="TF331065"/>
<dbReference type="BRENDA" id="3.4.21.35">
    <property type="organism ID" value="2681"/>
</dbReference>
<dbReference type="BRENDA" id="3.4.21.B42">
    <property type="organism ID" value="2681"/>
</dbReference>
<dbReference type="PathwayCommons" id="Q9UBX7"/>
<dbReference type="SignaLink" id="Q9UBX7"/>
<dbReference type="BioGRID-ORCS" id="11012">
    <property type="hits" value="13 hits in 1143 CRISPR screens"/>
</dbReference>
<dbReference type="ChiTaRS" id="KLK11">
    <property type="organism name" value="human"/>
</dbReference>
<dbReference type="GeneWiki" id="KLK11"/>
<dbReference type="GenomeRNAi" id="11012"/>
<dbReference type="Pharos" id="Q9UBX7">
    <property type="development level" value="Tbio"/>
</dbReference>
<dbReference type="PRO" id="PR:Q9UBX7"/>
<dbReference type="Proteomes" id="UP000005640">
    <property type="component" value="Chromosome 19"/>
</dbReference>
<dbReference type="RNAct" id="Q9UBX7">
    <property type="molecule type" value="protein"/>
</dbReference>
<dbReference type="Bgee" id="ENSG00000167757">
    <property type="expression patterns" value="Expressed in lower esophagus mucosa and 128 other cell types or tissues"/>
</dbReference>
<dbReference type="ExpressionAtlas" id="Q9UBX7">
    <property type="expression patterns" value="baseline and differential"/>
</dbReference>
<dbReference type="GO" id="GO:0070062">
    <property type="term" value="C:extracellular exosome"/>
    <property type="evidence" value="ECO:0007005"/>
    <property type="project" value="UniProtKB"/>
</dbReference>
<dbReference type="GO" id="GO:0005615">
    <property type="term" value="C:extracellular space"/>
    <property type="evidence" value="ECO:0007005"/>
    <property type="project" value="UniProtKB"/>
</dbReference>
<dbReference type="GO" id="GO:0005794">
    <property type="term" value="C:Golgi apparatus"/>
    <property type="evidence" value="ECO:0007669"/>
    <property type="project" value="UniProtKB-SubCell"/>
</dbReference>
<dbReference type="GO" id="GO:0030141">
    <property type="term" value="C:secretory granule"/>
    <property type="evidence" value="ECO:0000318"/>
    <property type="project" value="GO_Central"/>
</dbReference>
<dbReference type="GO" id="GO:0004252">
    <property type="term" value="F:serine-type endopeptidase activity"/>
    <property type="evidence" value="ECO:0000318"/>
    <property type="project" value="GO_Central"/>
</dbReference>
<dbReference type="GO" id="GO:0008236">
    <property type="term" value="F:serine-type peptidase activity"/>
    <property type="evidence" value="ECO:0000304"/>
    <property type="project" value="ProtInc"/>
</dbReference>
<dbReference type="GO" id="GO:0051604">
    <property type="term" value="P:protein maturation"/>
    <property type="evidence" value="ECO:0000318"/>
    <property type="project" value="GO_Central"/>
</dbReference>
<dbReference type="GO" id="GO:0006508">
    <property type="term" value="P:proteolysis"/>
    <property type="evidence" value="ECO:0007669"/>
    <property type="project" value="UniProtKB-KW"/>
</dbReference>
<dbReference type="CDD" id="cd00190">
    <property type="entry name" value="Tryp_SPc"/>
    <property type="match status" value="1"/>
</dbReference>
<dbReference type="FunFam" id="2.40.10.10:FF:000010">
    <property type="entry name" value="Kallikrein related peptidase 11"/>
    <property type="match status" value="1"/>
</dbReference>
<dbReference type="FunFam" id="2.40.10.10:FF:000056">
    <property type="entry name" value="Kallikrein related peptidase 11"/>
    <property type="match status" value="1"/>
</dbReference>
<dbReference type="Gene3D" id="2.40.10.10">
    <property type="entry name" value="Trypsin-like serine proteases"/>
    <property type="match status" value="2"/>
</dbReference>
<dbReference type="InterPro" id="IPR009003">
    <property type="entry name" value="Peptidase_S1_PA"/>
</dbReference>
<dbReference type="InterPro" id="IPR043504">
    <property type="entry name" value="Peptidase_S1_PA_chymotrypsin"/>
</dbReference>
<dbReference type="InterPro" id="IPR001314">
    <property type="entry name" value="Peptidase_S1A"/>
</dbReference>
<dbReference type="InterPro" id="IPR001254">
    <property type="entry name" value="Trypsin_dom"/>
</dbReference>
<dbReference type="InterPro" id="IPR018114">
    <property type="entry name" value="TRYPSIN_HIS"/>
</dbReference>
<dbReference type="InterPro" id="IPR033116">
    <property type="entry name" value="TRYPSIN_SER"/>
</dbReference>
<dbReference type="PANTHER" id="PTHR24271:SF68">
    <property type="entry name" value="KALLIKREIN-11"/>
    <property type="match status" value="1"/>
</dbReference>
<dbReference type="PANTHER" id="PTHR24271">
    <property type="entry name" value="KALLIKREIN-RELATED"/>
    <property type="match status" value="1"/>
</dbReference>
<dbReference type="Pfam" id="PF00089">
    <property type="entry name" value="Trypsin"/>
    <property type="match status" value="1"/>
</dbReference>
<dbReference type="PRINTS" id="PR00722">
    <property type="entry name" value="CHYMOTRYPSIN"/>
</dbReference>
<dbReference type="SMART" id="SM00020">
    <property type="entry name" value="Tryp_SPc"/>
    <property type="match status" value="1"/>
</dbReference>
<dbReference type="SUPFAM" id="SSF50494">
    <property type="entry name" value="Trypsin-like serine proteases"/>
    <property type="match status" value="1"/>
</dbReference>
<dbReference type="PROSITE" id="PS50240">
    <property type="entry name" value="TRYPSIN_DOM"/>
    <property type="match status" value="1"/>
</dbReference>
<dbReference type="PROSITE" id="PS00134">
    <property type="entry name" value="TRYPSIN_HIS"/>
    <property type="match status" value="1"/>
</dbReference>
<dbReference type="PROSITE" id="PS00135">
    <property type="entry name" value="TRYPSIN_SER"/>
    <property type="match status" value="1"/>
</dbReference>
<protein>
    <recommendedName>
        <fullName>Kallikrein-11</fullName>
        <shortName>hK11</shortName>
        <ecNumber>3.4.21.-</ecNumber>
    </recommendedName>
    <alternativeName>
        <fullName>Hippostasin</fullName>
    </alternativeName>
    <alternativeName>
        <fullName>Serine protease 20</fullName>
    </alternativeName>
    <alternativeName>
        <fullName>Trypsin-like protease</fullName>
    </alternativeName>
    <component>
        <recommendedName>
            <fullName>Kallikrein-11 inactive chain 1</fullName>
        </recommendedName>
    </component>
    <component>
        <recommendedName>
            <fullName>Kallikrein-11 inactive chain 2</fullName>
        </recommendedName>
    </component>
</protein>
<sequence length="282" mass="31059">MQRLRWLRDWKSSGRGLTAAKEPGARSSPLQAMRILQLILLALATGLVGGETRIIKGFECKPHSQPWQAALFEKTRLLCGATLIAPRWLLTAAHCLKPRYIVHLGQHNLQKEEGCEQTRTATESFPHPGFNNSLPNKDHRNDIMLVKMASPVSITWAVRPLTLSSRCVTAGTSCLISGWGSTSSPQLRLPHTLRCANITIIEHQKCENAYPGNITDTMVCASVQEGGKDSCQGDSGGPLVCNQSLQGIISWGQDPCAITRKPGVYTKVCKYVDWIQETMKNN</sequence>
<organism>
    <name type="scientific">Homo sapiens</name>
    <name type="common">Human</name>
    <dbReference type="NCBI Taxonomy" id="9606"/>
    <lineage>
        <taxon>Eukaryota</taxon>
        <taxon>Metazoa</taxon>
        <taxon>Chordata</taxon>
        <taxon>Craniata</taxon>
        <taxon>Vertebrata</taxon>
        <taxon>Euteleostomi</taxon>
        <taxon>Mammalia</taxon>
        <taxon>Eutheria</taxon>
        <taxon>Euarchontoglires</taxon>
        <taxon>Primates</taxon>
        <taxon>Haplorrhini</taxon>
        <taxon>Catarrhini</taxon>
        <taxon>Hominidae</taxon>
        <taxon>Homo</taxon>
    </lineage>
</organism>